<proteinExistence type="inferred from homology"/>
<dbReference type="EMBL" id="CP000259">
    <property type="protein sequence ID" value="ABF32236.1"/>
    <property type="molecule type" value="Genomic_DNA"/>
</dbReference>
<dbReference type="SMR" id="Q1JLI3"/>
<dbReference type="KEGG" id="spk:MGAS9429_Spy1049"/>
<dbReference type="HOGENOM" id="CLU_160655_1_1_9"/>
<dbReference type="Proteomes" id="UP000002433">
    <property type="component" value="Chromosome"/>
</dbReference>
<dbReference type="GO" id="GO:0005829">
    <property type="term" value="C:cytosol"/>
    <property type="evidence" value="ECO:0007669"/>
    <property type="project" value="TreeGrafter"/>
</dbReference>
<dbReference type="GO" id="GO:0015935">
    <property type="term" value="C:small ribosomal subunit"/>
    <property type="evidence" value="ECO:0007669"/>
    <property type="project" value="TreeGrafter"/>
</dbReference>
<dbReference type="GO" id="GO:0070181">
    <property type="term" value="F:small ribosomal subunit rRNA binding"/>
    <property type="evidence" value="ECO:0007669"/>
    <property type="project" value="TreeGrafter"/>
</dbReference>
<dbReference type="GO" id="GO:0003735">
    <property type="term" value="F:structural constituent of ribosome"/>
    <property type="evidence" value="ECO:0007669"/>
    <property type="project" value="InterPro"/>
</dbReference>
<dbReference type="GO" id="GO:0006412">
    <property type="term" value="P:translation"/>
    <property type="evidence" value="ECO:0007669"/>
    <property type="project" value="UniProtKB-UniRule"/>
</dbReference>
<dbReference type="FunFam" id="1.20.58.110:FF:000001">
    <property type="entry name" value="30S ribosomal protein S20"/>
    <property type="match status" value="1"/>
</dbReference>
<dbReference type="Gene3D" id="1.20.58.110">
    <property type="entry name" value="Ribosomal protein S20"/>
    <property type="match status" value="1"/>
</dbReference>
<dbReference type="HAMAP" id="MF_00500">
    <property type="entry name" value="Ribosomal_bS20"/>
    <property type="match status" value="1"/>
</dbReference>
<dbReference type="InterPro" id="IPR002583">
    <property type="entry name" value="Ribosomal_bS20"/>
</dbReference>
<dbReference type="InterPro" id="IPR036510">
    <property type="entry name" value="Ribosomal_bS20_sf"/>
</dbReference>
<dbReference type="NCBIfam" id="TIGR00029">
    <property type="entry name" value="S20"/>
    <property type="match status" value="1"/>
</dbReference>
<dbReference type="PANTHER" id="PTHR33398">
    <property type="entry name" value="30S RIBOSOMAL PROTEIN S20"/>
    <property type="match status" value="1"/>
</dbReference>
<dbReference type="PANTHER" id="PTHR33398:SF1">
    <property type="entry name" value="SMALL RIBOSOMAL SUBUNIT PROTEIN BS20C"/>
    <property type="match status" value="1"/>
</dbReference>
<dbReference type="Pfam" id="PF01649">
    <property type="entry name" value="Ribosomal_S20p"/>
    <property type="match status" value="1"/>
</dbReference>
<dbReference type="SUPFAM" id="SSF46992">
    <property type="entry name" value="Ribosomal protein S20"/>
    <property type="match status" value="1"/>
</dbReference>
<accession>Q1JLI3</accession>
<organism>
    <name type="scientific">Streptococcus pyogenes serotype M12 (strain MGAS9429)</name>
    <dbReference type="NCBI Taxonomy" id="370551"/>
    <lineage>
        <taxon>Bacteria</taxon>
        <taxon>Bacillati</taxon>
        <taxon>Bacillota</taxon>
        <taxon>Bacilli</taxon>
        <taxon>Lactobacillales</taxon>
        <taxon>Streptococcaceae</taxon>
        <taxon>Streptococcus</taxon>
    </lineage>
</organism>
<feature type="chain" id="PRO_0000260147" description="Small ribosomal subunit protein bS20">
    <location>
        <begin position="1"/>
        <end position="82"/>
    </location>
</feature>
<name>RS20_STRPC</name>
<comment type="function">
    <text evidence="1">Binds directly to 16S ribosomal RNA.</text>
</comment>
<comment type="similarity">
    <text evidence="1">Belongs to the bacterial ribosomal protein bS20 family.</text>
</comment>
<sequence>MEVKTLANIKSAIKRAELNVKANEKNSAQKSAMRTAIKAFEANPSEELFRAASSSIDKAESKGLIHKNKASRDKARLAAKLG</sequence>
<evidence type="ECO:0000255" key="1">
    <source>
        <dbReference type="HAMAP-Rule" id="MF_00500"/>
    </source>
</evidence>
<evidence type="ECO:0000305" key="2"/>
<gene>
    <name evidence="1" type="primary">rpsT</name>
    <name type="ordered locus">MGAS9429_Spy1049</name>
</gene>
<reference key="1">
    <citation type="journal article" date="2006" name="Proc. Natl. Acad. Sci. U.S.A.">
        <title>Molecular genetic anatomy of inter- and intraserotype variation in the human bacterial pathogen group A Streptococcus.</title>
        <authorList>
            <person name="Beres S.B."/>
            <person name="Richter E.W."/>
            <person name="Nagiec M.J."/>
            <person name="Sumby P."/>
            <person name="Porcella S.F."/>
            <person name="DeLeo F.R."/>
            <person name="Musser J.M."/>
        </authorList>
    </citation>
    <scope>NUCLEOTIDE SEQUENCE [LARGE SCALE GENOMIC DNA]</scope>
    <source>
        <strain>MGAS9429</strain>
    </source>
</reference>
<keyword id="KW-0687">Ribonucleoprotein</keyword>
<keyword id="KW-0689">Ribosomal protein</keyword>
<keyword id="KW-0694">RNA-binding</keyword>
<keyword id="KW-0699">rRNA-binding</keyword>
<protein>
    <recommendedName>
        <fullName evidence="1">Small ribosomal subunit protein bS20</fullName>
    </recommendedName>
    <alternativeName>
        <fullName evidence="2">30S ribosomal protein S20</fullName>
    </alternativeName>
</protein>